<sequence>MWKSILAIALGAALGALLRWFLGLKLNSLLSSIPPGTLLANLVGGYVIGAAIAYFAQAPGIAPEWRLLIITGFCGGLTTFSTFSAEVVSLLQEGRLGWAAGAIATHVSGSLLMTLLGLFSMNWMLGK</sequence>
<proteinExistence type="inferred from homology"/>
<name>FLUC_PSEAB</name>
<evidence type="ECO:0000255" key="1">
    <source>
        <dbReference type="HAMAP-Rule" id="MF_00454"/>
    </source>
</evidence>
<accession>Q02H57</accession>
<keyword id="KW-0997">Cell inner membrane</keyword>
<keyword id="KW-1003">Cell membrane</keyword>
<keyword id="KW-0407">Ion channel</keyword>
<keyword id="KW-0406">Ion transport</keyword>
<keyword id="KW-0472">Membrane</keyword>
<keyword id="KW-0479">Metal-binding</keyword>
<keyword id="KW-0915">Sodium</keyword>
<keyword id="KW-0812">Transmembrane</keyword>
<keyword id="KW-1133">Transmembrane helix</keyword>
<keyword id="KW-0813">Transport</keyword>
<dbReference type="EMBL" id="CP000438">
    <property type="protein sequence ID" value="ABJ13654.1"/>
    <property type="molecule type" value="Genomic_DNA"/>
</dbReference>
<dbReference type="RefSeq" id="WP_003141258.1">
    <property type="nucleotide sequence ID" value="NZ_CP034244.1"/>
</dbReference>
<dbReference type="SMR" id="Q02H57"/>
<dbReference type="KEGG" id="pau:PA14_56980"/>
<dbReference type="PseudoCAP" id="PA14_56980"/>
<dbReference type="HOGENOM" id="CLU_114342_3_3_6"/>
<dbReference type="BioCyc" id="PAER208963:G1G74-4799-MONOMER"/>
<dbReference type="Proteomes" id="UP000000653">
    <property type="component" value="Chromosome"/>
</dbReference>
<dbReference type="GO" id="GO:0005886">
    <property type="term" value="C:plasma membrane"/>
    <property type="evidence" value="ECO:0007669"/>
    <property type="project" value="UniProtKB-SubCell"/>
</dbReference>
<dbReference type="GO" id="GO:0062054">
    <property type="term" value="F:fluoride channel activity"/>
    <property type="evidence" value="ECO:0007669"/>
    <property type="project" value="UniProtKB-UniRule"/>
</dbReference>
<dbReference type="GO" id="GO:0046872">
    <property type="term" value="F:metal ion binding"/>
    <property type="evidence" value="ECO:0007669"/>
    <property type="project" value="UniProtKB-KW"/>
</dbReference>
<dbReference type="GO" id="GO:0140114">
    <property type="term" value="P:cellular detoxification of fluoride"/>
    <property type="evidence" value="ECO:0007669"/>
    <property type="project" value="UniProtKB-UniRule"/>
</dbReference>
<dbReference type="HAMAP" id="MF_00454">
    <property type="entry name" value="FluC"/>
    <property type="match status" value="1"/>
</dbReference>
<dbReference type="InterPro" id="IPR003691">
    <property type="entry name" value="FluC"/>
</dbReference>
<dbReference type="NCBIfam" id="TIGR00494">
    <property type="entry name" value="crcB"/>
    <property type="match status" value="1"/>
</dbReference>
<dbReference type="NCBIfam" id="NF010792">
    <property type="entry name" value="PRK14196.1"/>
    <property type="match status" value="1"/>
</dbReference>
<dbReference type="PANTHER" id="PTHR28259">
    <property type="entry name" value="FLUORIDE EXPORT PROTEIN 1-RELATED"/>
    <property type="match status" value="1"/>
</dbReference>
<dbReference type="PANTHER" id="PTHR28259:SF1">
    <property type="entry name" value="FLUORIDE EXPORT PROTEIN 1-RELATED"/>
    <property type="match status" value="1"/>
</dbReference>
<dbReference type="Pfam" id="PF02537">
    <property type="entry name" value="CRCB"/>
    <property type="match status" value="1"/>
</dbReference>
<reference key="1">
    <citation type="journal article" date="2006" name="Genome Biol.">
        <title>Genomic analysis reveals that Pseudomonas aeruginosa virulence is combinatorial.</title>
        <authorList>
            <person name="Lee D.G."/>
            <person name="Urbach J.M."/>
            <person name="Wu G."/>
            <person name="Liberati N.T."/>
            <person name="Feinbaum R.L."/>
            <person name="Miyata S."/>
            <person name="Diggins L.T."/>
            <person name="He J."/>
            <person name="Saucier M."/>
            <person name="Deziel E."/>
            <person name="Friedman L."/>
            <person name="Li L."/>
            <person name="Grills G."/>
            <person name="Montgomery K."/>
            <person name="Kucherlapati R."/>
            <person name="Rahme L.G."/>
            <person name="Ausubel F.M."/>
        </authorList>
    </citation>
    <scope>NUCLEOTIDE SEQUENCE [LARGE SCALE GENOMIC DNA]</scope>
    <source>
        <strain>UCBPP-PA14</strain>
    </source>
</reference>
<gene>
    <name evidence="1" type="primary">fluC</name>
    <name evidence="1" type="synonym">crcB</name>
    <name type="ordered locus">PA14_56980</name>
</gene>
<feature type="chain" id="PRO_1000026408" description="Fluoride-specific ion channel FluC">
    <location>
        <begin position="1"/>
        <end position="127"/>
    </location>
</feature>
<feature type="transmembrane region" description="Helical" evidence="1">
    <location>
        <begin position="4"/>
        <end position="24"/>
    </location>
</feature>
<feature type="transmembrane region" description="Helical" evidence="1">
    <location>
        <begin position="36"/>
        <end position="56"/>
    </location>
</feature>
<feature type="transmembrane region" description="Helical" evidence="1">
    <location>
        <begin position="68"/>
        <end position="88"/>
    </location>
</feature>
<feature type="transmembrane region" description="Helical" evidence="1">
    <location>
        <begin position="99"/>
        <end position="119"/>
    </location>
</feature>
<feature type="binding site" evidence="1">
    <location>
        <position position="75"/>
    </location>
    <ligand>
        <name>Na(+)</name>
        <dbReference type="ChEBI" id="CHEBI:29101"/>
        <note>structural</note>
    </ligand>
</feature>
<feature type="binding site" evidence="1">
    <location>
        <position position="78"/>
    </location>
    <ligand>
        <name>Na(+)</name>
        <dbReference type="ChEBI" id="CHEBI:29101"/>
        <note>structural</note>
    </ligand>
</feature>
<comment type="function">
    <text evidence="1">Fluoride-specific ion channel. Important for reducing fluoride concentration in the cell, thus reducing its toxicity.</text>
</comment>
<comment type="catalytic activity">
    <reaction evidence="1">
        <text>fluoride(in) = fluoride(out)</text>
        <dbReference type="Rhea" id="RHEA:76159"/>
        <dbReference type="ChEBI" id="CHEBI:17051"/>
    </reaction>
    <physiologicalReaction direction="left-to-right" evidence="1">
        <dbReference type="Rhea" id="RHEA:76160"/>
    </physiologicalReaction>
</comment>
<comment type="activity regulation">
    <text evidence="1">Na(+) is not transported, but it plays an essential structural role and its presence is essential for fluoride channel function.</text>
</comment>
<comment type="subcellular location">
    <subcellularLocation>
        <location evidence="1">Cell inner membrane</location>
        <topology evidence="1">Multi-pass membrane protein</topology>
    </subcellularLocation>
</comment>
<comment type="similarity">
    <text evidence="1">Belongs to the fluoride channel Fluc/FEX (TC 1.A.43) family.</text>
</comment>
<organism>
    <name type="scientific">Pseudomonas aeruginosa (strain UCBPP-PA14)</name>
    <dbReference type="NCBI Taxonomy" id="208963"/>
    <lineage>
        <taxon>Bacteria</taxon>
        <taxon>Pseudomonadati</taxon>
        <taxon>Pseudomonadota</taxon>
        <taxon>Gammaproteobacteria</taxon>
        <taxon>Pseudomonadales</taxon>
        <taxon>Pseudomonadaceae</taxon>
        <taxon>Pseudomonas</taxon>
    </lineage>
</organism>
<protein>
    <recommendedName>
        <fullName evidence="1">Fluoride-specific ion channel FluC</fullName>
    </recommendedName>
</protein>